<comment type="catalytic activity">
    <reaction evidence="1">
        <text>RX + glutathione = an S-substituted glutathione + a halide anion + H(+)</text>
        <dbReference type="Rhea" id="RHEA:16437"/>
        <dbReference type="ChEBI" id="CHEBI:15378"/>
        <dbReference type="ChEBI" id="CHEBI:16042"/>
        <dbReference type="ChEBI" id="CHEBI:17792"/>
        <dbReference type="ChEBI" id="CHEBI:57925"/>
        <dbReference type="ChEBI" id="CHEBI:90779"/>
        <dbReference type="EC" id="2.5.1.18"/>
    </reaction>
</comment>
<comment type="subunit">
    <text evidence="1">Homodimer.</text>
</comment>
<comment type="similarity">
    <text evidence="2">Belongs to the GST superfamily.</text>
</comment>
<accession>Q12390</accession>
<accession>D6VXU9</accession>
<keyword id="KW-0002">3D-structure</keyword>
<keyword id="KW-1185">Reference proteome</keyword>
<keyword id="KW-0808">Transferase</keyword>
<protein>
    <recommendedName>
        <fullName>Glutathione S-transferase 2</fullName>
        <ecNumber>2.5.1.18</ecNumber>
    </recommendedName>
    <alternativeName>
        <fullName>GST-II</fullName>
    </alternativeName>
</protein>
<reference key="1">
    <citation type="submission" date="1995-01" db="EMBL/GenBank/DDBJ databases">
        <title>Sequence of a 37 kb DNA fragment from chromosome XII of Saccharomyces cerevisiae including the subtelomeric region of the left arm.</title>
        <authorList>
            <person name="Wedler H."/>
            <person name="Wambutt R."/>
        </authorList>
    </citation>
    <scope>NUCLEOTIDE SEQUENCE [GENOMIC DNA]</scope>
    <source>
        <strain>ATCC 204511 / S288c / AB972</strain>
    </source>
</reference>
<reference key="2">
    <citation type="journal article" date="1997" name="Nature">
        <title>The nucleotide sequence of Saccharomyces cerevisiae chromosome XII.</title>
        <authorList>
            <person name="Johnston M."/>
            <person name="Hillier L.W."/>
            <person name="Riles L."/>
            <person name="Albermann K."/>
            <person name="Andre B."/>
            <person name="Ansorge W."/>
            <person name="Benes V."/>
            <person name="Brueckner M."/>
            <person name="Delius H."/>
            <person name="Dubois E."/>
            <person name="Duesterhoeft A."/>
            <person name="Entian K.-D."/>
            <person name="Floeth M."/>
            <person name="Goffeau A."/>
            <person name="Hebling U."/>
            <person name="Heumann K."/>
            <person name="Heuss-Neitzel D."/>
            <person name="Hilbert H."/>
            <person name="Hilger F."/>
            <person name="Kleine K."/>
            <person name="Koetter P."/>
            <person name="Louis E.J."/>
            <person name="Messenguy F."/>
            <person name="Mewes H.-W."/>
            <person name="Miosga T."/>
            <person name="Moestl D."/>
            <person name="Mueller-Auer S."/>
            <person name="Nentwich U."/>
            <person name="Obermaier B."/>
            <person name="Piravandi E."/>
            <person name="Pohl T.M."/>
            <person name="Portetelle D."/>
            <person name="Purnelle B."/>
            <person name="Rechmann S."/>
            <person name="Rieger M."/>
            <person name="Rinke M."/>
            <person name="Rose M."/>
            <person name="Scharfe M."/>
            <person name="Scherens B."/>
            <person name="Scholler P."/>
            <person name="Schwager C."/>
            <person name="Schwarz S."/>
            <person name="Underwood A.P."/>
            <person name="Urrestarazu L.A."/>
            <person name="Vandenbol M."/>
            <person name="Verhasselt P."/>
            <person name="Vierendeels F."/>
            <person name="Voet M."/>
            <person name="Volckaert G."/>
            <person name="Voss H."/>
            <person name="Wambutt R."/>
            <person name="Wedler E."/>
            <person name="Wedler H."/>
            <person name="Zimmermann F.K."/>
            <person name="Zollner A."/>
            <person name="Hani J."/>
            <person name="Hoheisel J.D."/>
        </authorList>
    </citation>
    <scope>NUCLEOTIDE SEQUENCE [LARGE SCALE GENOMIC DNA]</scope>
    <source>
        <strain>ATCC 204508 / S288c</strain>
    </source>
</reference>
<reference key="3">
    <citation type="journal article" date="2014" name="G3 (Bethesda)">
        <title>The reference genome sequence of Saccharomyces cerevisiae: Then and now.</title>
        <authorList>
            <person name="Engel S.R."/>
            <person name="Dietrich F.S."/>
            <person name="Fisk D.G."/>
            <person name="Binkley G."/>
            <person name="Balakrishnan R."/>
            <person name="Costanzo M.C."/>
            <person name="Dwight S.S."/>
            <person name="Hitz B.C."/>
            <person name="Karra K."/>
            <person name="Nash R.S."/>
            <person name="Weng S."/>
            <person name="Wong E.D."/>
            <person name="Lloyd P."/>
            <person name="Skrzypek M.S."/>
            <person name="Miyasato S.R."/>
            <person name="Simison M."/>
            <person name="Cherry J.M."/>
        </authorList>
    </citation>
    <scope>GENOME REANNOTATION</scope>
    <source>
        <strain>ATCC 204508 / S288c</strain>
    </source>
</reference>
<reference key="4">
    <citation type="journal article" date="2007" name="Genome Res.">
        <title>Approaching a complete repository of sequence-verified protein-encoding clones for Saccharomyces cerevisiae.</title>
        <authorList>
            <person name="Hu Y."/>
            <person name="Rolfs A."/>
            <person name="Bhullar B."/>
            <person name="Murthy T.V.S."/>
            <person name="Zhu C."/>
            <person name="Berger M.F."/>
            <person name="Camargo A.A."/>
            <person name="Kelley F."/>
            <person name="McCarron S."/>
            <person name="Jepson D."/>
            <person name="Richardson A."/>
            <person name="Raphael J."/>
            <person name="Moreira D."/>
            <person name="Taycher E."/>
            <person name="Zuo D."/>
            <person name="Mohr S."/>
            <person name="Kane M.F."/>
            <person name="Williamson J."/>
            <person name="Simpson A.J.G."/>
            <person name="Bulyk M.L."/>
            <person name="Harlow E."/>
            <person name="Marsischky G."/>
            <person name="Kolodner R.D."/>
            <person name="LaBaer J."/>
        </authorList>
    </citation>
    <scope>NUCLEOTIDE SEQUENCE [GENOMIC DNA]</scope>
    <source>
        <strain>ATCC 204508 / S288c</strain>
    </source>
</reference>
<reference key="5">
    <citation type="journal article" date="1998" name="J. Biol. Chem.">
        <title>A novel membrane-bound glutathione S-transferase functions in the stationary phase of the yeast Saccharomyces cerevisiae.</title>
        <authorList>
            <person name="Choi J.H."/>
            <person name="Lou W."/>
            <person name="Vancura A."/>
        </authorList>
    </citation>
    <scope>CHARACTERIZATION</scope>
</reference>
<reference key="6">
    <citation type="journal article" date="2009" name="EMBO Rep.">
        <title>Structures of yeast glutathione-S-transferase Gtt2 reveal a new catalytic type of GST family.</title>
        <authorList>
            <person name="Ma X.X."/>
            <person name="Jiang Y.L."/>
            <person name="He Y.X."/>
            <person name="Bao R."/>
            <person name="Chen Y."/>
            <person name="Zhou C.Z."/>
        </authorList>
    </citation>
    <scope>X-RAY CRYSTALLOGRAPHY (2.1 ANGSTROMS) IN COMPLEX WITH GLUTATHIONE</scope>
    <scope>CATALYTIC ACTIVITY</scope>
    <scope>MUTAGENESIS OF GLY-27; SER-129 AND HIS-133</scope>
    <scope>SUBUNIT</scope>
</reference>
<evidence type="ECO:0000269" key="1">
    <source>
    </source>
</evidence>
<evidence type="ECO:0000305" key="2"/>
<evidence type="ECO:0007829" key="3">
    <source>
        <dbReference type="PDB" id="3IBH"/>
    </source>
</evidence>
<feature type="chain" id="PRO_0000185988" description="Glutathione S-transferase 2">
    <location>
        <begin position="1"/>
        <end position="233"/>
    </location>
</feature>
<feature type="domain" description="GST N-terminal">
    <location>
        <begin position="17"/>
        <end position="101"/>
    </location>
</feature>
<feature type="domain" description="GST C-terminal">
    <location>
        <begin position="106"/>
        <end position="233"/>
    </location>
</feature>
<feature type="binding site" evidence="1">
    <location>
        <position position="29"/>
    </location>
    <ligand>
        <name>glutathione</name>
        <dbReference type="ChEBI" id="CHEBI:57925"/>
    </ligand>
</feature>
<feature type="binding site" evidence="1">
    <location>
        <position position="58"/>
    </location>
    <ligand>
        <name>glutathione</name>
        <dbReference type="ChEBI" id="CHEBI:57925"/>
    </ligand>
</feature>
<feature type="binding site" evidence="1">
    <location>
        <position position="72"/>
    </location>
    <ligand>
        <name>glutathione</name>
        <dbReference type="ChEBI" id="CHEBI:57925"/>
    </ligand>
</feature>
<feature type="binding site">
    <location>
        <begin position="85"/>
        <end position="86"/>
    </location>
    <ligand>
        <name>glutathione</name>
        <dbReference type="ChEBI" id="CHEBI:57925"/>
    </ligand>
</feature>
<feature type="binding site" evidence="1">
    <location>
        <position position="133"/>
    </location>
    <ligand>
        <name>glutathione</name>
        <dbReference type="ChEBI" id="CHEBI:57925"/>
    </ligand>
</feature>
<feature type="mutagenesis site" description="Reduced enzyme activity." evidence="1">
    <original>G</original>
    <variation>A</variation>
    <location>
        <position position="27"/>
    </location>
</feature>
<feature type="mutagenesis site" description="Loss of enzyme activity." evidence="1">
    <original>G</original>
    <variation>C</variation>
    <variation>F</variation>
    <variation>S</variation>
    <location>
        <position position="27"/>
    </location>
</feature>
<feature type="mutagenesis site" description="Reduced enzyme activity." evidence="1">
    <original>S</original>
    <variation>A</variation>
    <location>
        <position position="129"/>
    </location>
</feature>
<feature type="mutagenesis site" description="Loss of enzyme activity." evidence="1">
    <original>H</original>
    <variation>A</variation>
    <location>
        <position position="133"/>
    </location>
</feature>
<feature type="strand" evidence="3">
    <location>
        <begin position="20"/>
        <end position="23"/>
    </location>
</feature>
<feature type="helix" evidence="3">
    <location>
        <begin position="28"/>
        <end position="39"/>
    </location>
</feature>
<feature type="helix" evidence="3">
    <location>
        <begin position="43"/>
        <end position="45"/>
    </location>
</feature>
<feature type="strand" evidence="3">
    <location>
        <begin position="47"/>
        <end position="50"/>
    </location>
</feature>
<feature type="helix" evidence="3">
    <location>
        <begin position="53"/>
        <end position="55"/>
    </location>
</feature>
<feature type="helix" evidence="3">
    <location>
        <begin position="57"/>
        <end position="59"/>
    </location>
</feature>
<feature type="helix" evidence="3">
    <location>
        <begin position="61"/>
        <end position="66"/>
    </location>
</feature>
<feature type="strand" evidence="3">
    <location>
        <begin position="74"/>
        <end position="76"/>
    </location>
</feature>
<feature type="strand" evidence="3">
    <location>
        <begin position="82"/>
        <end position="85"/>
    </location>
</feature>
<feature type="helix" evidence="3">
    <location>
        <begin position="86"/>
        <end position="96"/>
    </location>
</feature>
<feature type="strand" evidence="3">
    <location>
        <begin position="101"/>
        <end position="103"/>
    </location>
</feature>
<feature type="helix" evidence="3">
    <location>
        <begin position="107"/>
        <end position="123"/>
    </location>
</feature>
<feature type="helix" evidence="3">
    <location>
        <begin position="125"/>
        <end position="135"/>
    </location>
</feature>
<feature type="turn" evidence="3">
    <location>
        <begin position="141"/>
        <end position="143"/>
    </location>
</feature>
<feature type="helix" evidence="3">
    <location>
        <begin position="149"/>
        <end position="170"/>
    </location>
</feature>
<feature type="strand" evidence="3">
    <location>
        <begin position="178"/>
        <end position="180"/>
    </location>
</feature>
<feature type="helix" evidence="3">
    <location>
        <begin position="183"/>
        <end position="197"/>
    </location>
</feature>
<feature type="helix" evidence="3">
    <location>
        <begin position="207"/>
        <end position="218"/>
    </location>
</feature>
<feature type="helix" evidence="3">
    <location>
        <begin position="220"/>
        <end position="225"/>
    </location>
</feature>
<name>GST2_YEAST</name>
<gene>
    <name type="primary">GTT2</name>
    <name type="ordered locus">YLL060C</name>
    <name type="ORF">L0560</name>
</gene>
<proteinExistence type="evidence at protein level"/>
<organism>
    <name type="scientific">Saccharomyces cerevisiae (strain ATCC 204508 / S288c)</name>
    <name type="common">Baker's yeast</name>
    <dbReference type="NCBI Taxonomy" id="559292"/>
    <lineage>
        <taxon>Eukaryota</taxon>
        <taxon>Fungi</taxon>
        <taxon>Dikarya</taxon>
        <taxon>Ascomycota</taxon>
        <taxon>Saccharomycotina</taxon>
        <taxon>Saccharomycetes</taxon>
        <taxon>Saccharomycetales</taxon>
        <taxon>Saccharomycetaceae</taxon>
        <taxon>Saccharomyces</taxon>
    </lineage>
</organism>
<sequence length="233" mass="26340">MNGRGFLIYNGGEKMKQKMIIYDTPAGPYPARVRIALAEKNMLSSVQFVRINLWKGEHKKPEFLAKNYSGTVPVLELDDGTLIAECTAITEYIDALDGTPTLTGKTPLEKGVIHMMNKRAELELLDPVSVYFHHATPGLGPEVELYQNKEWGLRQRDKALHGMHYFDTVLRERPYVAGDSFSMADITVIAGLIFAAIVKLQVPEECEALRAWYKRMQQRPSVKKLLEIRSKSS</sequence>
<dbReference type="EC" id="2.5.1.18"/>
<dbReference type="EMBL" id="Z47973">
    <property type="protein sequence ID" value="CAA87997.1"/>
    <property type="molecule type" value="Genomic_DNA"/>
</dbReference>
<dbReference type="EMBL" id="Z73165">
    <property type="protein sequence ID" value="CAA97513.1"/>
    <property type="molecule type" value="Genomic_DNA"/>
</dbReference>
<dbReference type="EMBL" id="AY557940">
    <property type="protein sequence ID" value="AAS56266.1"/>
    <property type="molecule type" value="Genomic_DNA"/>
</dbReference>
<dbReference type="EMBL" id="BK006945">
    <property type="protein sequence ID" value="DAA09265.1"/>
    <property type="molecule type" value="Genomic_DNA"/>
</dbReference>
<dbReference type="PIR" id="S50960">
    <property type="entry name" value="S50960"/>
</dbReference>
<dbReference type="RefSeq" id="NP_013040.1">
    <property type="nucleotide sequence ID" value="NM_001181880.1"/>
</dbReference>
<dbReference type="PDB" id="3ERF">
    <property type="method" value="X-ray"/>
    <property type="resolution" value="2.23 A"/>
    <property type="chains" value="A=1-233"/>
</dbReference>
<dbReference type="PDB" id="3ERG">
    <property type="method" value="X-ray"/>
    <property type="resolution" value="2.20 A"/>
    <property type="chains" value="A/B=1-233"/>
</dbReference>
<dbReference type="PDB" id="3IBH">
    <property type="method" value="X-ray"/>
    <property type="resolution" value="2.10 A"/>
    <property type="chains" value="A=1-233"/>
</dbReference>
<dbReference type="PDBsum" id="3ERF"/>
<dbReference type="PDBsum" id="3ERG"/>
<dbReference type="PDBsum" id="3IBH"/>
<dbReference type="SMR" id="Q12390"/>
<dbReference type="BioGRID" id="31256">
    <property type="interactions" value="43"/>
</dbReference>
<dbReference type="DIP" id="DIP-2981N"/>
<dbReference type="FunCoup" id="Q12390">
    <property type="interactions" value="713"/>
</dbReference>
<dbReference type="IntAct" id="Q12390">
    <property type="interactions" value="1"/>
</dbReference>
<dbReference type="MINT" id="Q12390"/>
<dbReference type="STRING" id="4932.YLL060C"/>
<dbReference type="PaxDb" id="4932-YLL060C"/>
<dbReference type="PeptideAtlas" id="Q12390"/>
<dbReference type="EnsemblFungi" id="YLL060C_mRNA">
    <property type="protein sequence ID" value="YLL060C"/>
    <property type="gene ID" value="YLL060C"/>
</dbReference>
<dbReference type="GeneID" id="850666"/>
<dbReference type="KEGG" id="sce:YLL060C"/>
<dbReference type="AGR" id="SGD:S000003983"/>
<dbReference type="SGD" id="S000003983">
    <property type="gene designation" value="GTT2"/>
</dbReference>
<dbReference type="VEuPathDB" id="FungiDB:YLL060C"/>
<dbReference type="eggNOG" id="KOG0867">
    <property type="taxonomic scope" value="Eukaryota"/>
</dbReference>
<dbReference type="HOGENOM" id="CLU_011226_6_3_1"/>
<dbReference type="InParanoid" id="Q12390"/>
<dbReference type="OMA" id="TFMRSQW"/>
<dbReference type="OrthoDB" id="2309723at2759"/>
<dbReference type="BioCyc" id="MetaCyc:YLL060C-MONOMER"/>
<dbReference type="BioCyc" id="YEAST:YLL060C-MONOMER"/>
<dbReference type="SABIO-RK" id="Q12390"/>
<dbReference type="BioGRID-ORCS" id="850666">
    <property type="hits" value="1 hit in 10 CRISPR screens"/>
</dbReference>
<dbReference type="EvolutionaryTrace" id="Q12390"/>
<dbReference type="PRO" id="PR:Q12390"/>
<dbReference type="Proteomes" id="UP000002311">
    <property type="component" value="Chromosome XII"/>
</dbReference>
<dbReference type="RNAct" id="Q12390">
    <property type="molecule type" value="protein"/>
</dbReference>
<dbReference type="GO" id="GO:0005737">
    <property type="term" value="C:cytoplasm"/>
    <property type="evidence" value="ECO:0000318"/>
    <property type="project" value="GO_Central"/>
</dbReference>
<dbReference type="GO" id="GO:0005739">
    <property type="term" value="C:mitochondrion"/>
    <property type="evidence" value="ECO:0007005"/>
    <property type="project" value="SGD"/>
</dbReference>
<dbReference type="GO" id="GO:0043295">
    <property type="term" value="F:glutathione binding"/>
    <property type="evidence" value="ECO:0000318"/>
    <property type="project" value="GO_Central"/>
</dbReference>
<dbReference type="GO" id="GO:0004364">
    <property type="term" value="F:glutathione transferase activity"/>
    <property type="evidence" value="ECO:0000314"/>
    <property type="project" value="SGD"/>
</dbReference>
<dbReference type="GO" id="GO:0006749">
    <property type="term" value="P:glutathione metabolic process"/>
    <property type="evidence" value="ECO:0000314"/>
    <property type="project" value="SGD"/>
</dbReference>
<dbReference type="CDD" id="cd03182">
    <property type="entry name" value="GST_C_GTT2_like"/>
    <property type="match status" value="1"/>
</dbReference>
<dbReference type="CDD" id="cd03051">
    <property type="entry name" value="GST_N_GTT2_like"/>
    <property type="match status" value="1"/>
</dbReference>
<dbReference type="FunFam" id="1.20.1050.10:FF:000065">
    <property type="entry name" value="Glutathione S-transferase 2"/>
    <property type="match status" value="1"/>
</dbReference>
<dbReference type="FunFam" id="3.40.30.10:FF:000376">
    <property type="entry name" value="Glutathione S-transferase 2"/>
    <property type="match status" value="1"/>
</dbReference>
<dbReference type="Gene3D" id="1.20.1050.10">
    <property type="match status" value="1"/>
</dbReference>
<dbReference type="Gene3D" id="3.40.30.10">
    <property type="entry name" value="Glutaredoxin"/>
    <property type="match status" value="1"/>
</dbReference>
<dbReference type="InterPro" id="IPR010987">
    <property type="entry name" value="Glutathione-S-Trfase_C-like"/>
</dbReference>
<dbReference type="InterPro" id="IPR036282">
    <property type="entry name" value="Glutathione-S-Trfase_C_sf"/>
</dbReference>
<dbReference type="InterPro" id="IPR040079">
    <property type="entry name" value="Glutathione_S-Trfase"/>
</dbReference>
<dbReference type="InterPro" id="IPR004045">
    <property type="entry name" value="Glutathione_S-Trfase_N"/>
</dbReference>
<dbReference type="InterPro" id="IPR004046">
    <property type="entry name" value="GST_C"/>
</dbReference>
<dbReference type="InterPro" id="IPR050983">
    <property type="entry name" value="GST_Omega/HSP26"/>
</dbReference>
<dbReference type="InterPro" id="IPR034346">
    <property type="entry name" value="Gtt2-like_C"/>
</dbReference>
<dbReference type="InterPro" id="IPR034345">
    <property type="entry name" value="Gtt2-like_N"/>
</dbReference>
<dbReference type="InterPro" id="IPR036249">
    <property type="entry name" value="Thioredoxin-like_sf"/>
</dbReference>
<dbReference type="PANTHER" id="PTHR43968">
    <property type="match status" value="1"/>
</dbReference>
<dbReference type="PANTHER" id="PTHR43968:SF6">
    <property type="entry name" value="GLUTATHIONE S-TRANSFERASE OMEGA"/>
    <property type="match status" value="1"/>
</dbReference>
<dbReference type="Pfam" id="PF00043">
    <property type="entry name" value="GST_C"/>
    <property type="match status" value="1"/>
</dbReference>
<dbReference type="Pfam" id="PF13409">
    <property type="entry name" value="GST_N_2"/>
    <property type="match status" value="1"/>
</dbReference>
<dbReference type="SFLD" id="SFLDS00019">
    <property type="entry name" value="Glutathione_Transferase_(cytos"/>
    <property type="match status" value="1"/>
</dbReference>
<dbReference type="SFLD" id="SFLDG00358">
    <property type="entry name" value="Main_(cytGST)"/>
    <property type="match status" value="1"/>
</dbReference>
<dbReference type="SUPFAM" id="SSF47616">
    <property type="entry name" value="GST C-terminal domain-like"/>
    <property type="match status" value="1"/>
</dbReference>
<dbReference type="SUPFAM" id="SSF52833">
    <property type="entry name" value="Thioredoxin-like"/>
    <property type="match status" value="1"/>
</dbReference>
<dbReference type="PROSITE" id="PS50405">
    <property type="entry name" value="GST_CTER"/>
    <property type="match status" value="1"/>
</dbReference>
<dbReference type="PROSITE" id="PS50404">
    <property type="entry name" value="GST_NTER"/>
    <property type="match status" value="1"/>
</dbReference>